<organism>
    <name type="scientific">Cavia porcellus</name>
    <name type="common">Guinea pig</name>
    <dbReference type="NCBI Taxonomy" id="10141"/>
    <lineage>
        <taxon>Eukaryota</taxon>
        <taxon>Metazoa</taxon>
        <taxon>Chordata</taxon>
        <taxon>Craniata</taxon>
        <taxon>Vertebrata</taxon>
        <taxon>Euteleostomi</taxon>
        <taxon>Mammalia</taxon>
        <taxon>Eutheria</taxon>
        <taxon>Euarchontoglires</taxon>
        <taxon>Glires</taxon>
        <taxon>Rodentia</taxon>
        <taxon>Hystricomorpha</taxon>
        <taxon>Caviidae</taxon>
        <taxon>Cavia</taxon>
    </lineage>
</organism>
<proteinExistence type="inferred from homology"/>
<comment type="function">
    <text evidence="2 3 4 6">Receptor for endogenous opioids such as beta-endorphin and endomorphin. Receptor for natural and synthetic opioids including morphine, heroin, DAMGO, fentanyl, etorphine, buprenorphin and methadone (PubMed:8799185). Also activated by enkephalin peptides, such as Met-enkephalin or Met-enkephalin-Arg-Phe, with higher affinity for Met-enkephalin-Arg-Phe. Agonist binding to the receptor induces coupling to an inactive GDP-bound heterotrimeric G-protein complex and subsequent exchange of GDP for GTP in the G-protein alpha subunit leading to dissociation of the G-protein complex with the free GTP-bound G-protein alpha and the G-protein beta-gamma dimer activating downstream cellular effectors. The agonist- and cell type-specific activity is predominantly coupled to pertussis toxin-sensitive G(i) and G(o) G alpha proteins, GNAI1, GNAI2, GNAI3 and GNAO1, and to a lesser extent to pertussis toxin-insensitive G alpha proteins GNAZ and GNA15. They mediate an array of downstream cellular responses, including inhibition of adenylate cyclase activity and both N-type and L-type calcium channels, activation of inward rectifying potassium channels, mitogen-activated protein kinase (MAPK), phospholipase C (PLC), phosphoinositide/protein kinase (PKC), phosphoinositide 3-kinase (PI3K) and regulation of NF-kappa-B. Also couples to adenylate cyclase stimulatory G alpha proteins. The selective temporal coupling to G-proteins and subsequent signaling can be regulated by RGSZ proteins, such as RGS9, RGS17 and RGS4. Phosphorylation by members of the GPRK subfamily of Ser/Thr protein kinases and association with beta-arrestins is involved in short-term receptor desensitization. Beta-arrestins associate with the GPRK-phosphorylated receptor and uncouple it from the G-protein thus terminating signal transduction. The phosphorylated receptor is internalized through endocytosis via clathrin-coated pits which involves beta-arrestins. The activation of the ERK pathway occurs either in a G-protein-dependent or a beta-arrestin-dependent manner and is regulated by agonist-specific receptor phosphorylation. Acts as a class A G-protein coupled receptor (GPCR) which dissociates from beta-arrestin at or near the plasma membrane and undergoes rapid recycling. Receptor down-regulation pathways are varying with the agonist and occur dependent or independent of G-protein coupling. Endogenous ligands induce rapid desensitization, endocytosis and recycling. Heterooligomerization with other GPCRs can modulate agonist binding, signaling and trafficking properties. Involved in neurogenesis (By similarity).</text>
</comment>
<comment type="subunit">
    <text evidence="2 3 4">Forms homooligomers and heterooligomers with other GPCRs, such as OPRD1, OPRK1, OPRL1, NPFFR2, ADRA2A, SSTR2, CNR1 and CCR5 (probably in dimeric forms). Interacts with heterotrimeric G proteins; interaction with a heterotrimeric complex containing GNAI1, GNB1 and GNG2 stabilizes the active conformation of the receptor and increases its affinity for endomorphin-2, the synthetic opioid peptide DAMGO and for morphinan agonists (By similarity). Interacts with PPL; the interaction disrupts agonist-mediated G-protein activation. Interacts (via C-terminus) with DNAJB4 (via C-terminus). Interacts with calmodulin; the interaction inhibits the constitutive activity of OPRM1; it abolishes basal and attenuates agonist-stimulated G-protein coupling. Interacts with FLNA, PLD2, RANBP9 and WLS and GPM6A (By similarity). Interacts with RTP4 (By similarity). Interacts with SYP and GNAS (By similarity). Interacts with RGS9, RGS17, RGS20, RGS4, PPP1R9B and HINT1.</text>
</comment>
<comment type="subcellular location">
    <subcellularLocation>
        <location evidence="6">Cell membrane</location>
        <topology evidence="6">Multi-pass membrane protein</topology>
    </subcellularLocation>
    <subcellularLocation>
        <location evidence="6">Cell projection</location>
        <location evidence="6">Axon</location>
    </subcellularLocation>
    <subcellularLocation>
        <location evidence="6">Perikaryon</location>
    </subcellularLocation>
    <subcellularLocation>
        <location evidence="6">Cell projection</location>
        <location evidence="6">Dendrite</location>
    </subcellularLocation>
    <subcellularLocation>
        <location evidence="6">Endosome</location>
    </subcellularLocation>
    <text evidence="6">Is rapidly internalized after agonist binding.</text>
</comment>
<comment type="PTM">
    <text evidence="1">Phosphorylated. Differentially phosphorylated in basal and agonist-induced conditions. Agonist-mediated phosphorylation modulates receptor internalization. Phosphorylated by GRK2 in a agonist-dependent manner. Phosphorylated on tyrosine residues; the phosphorylation is involved in agonist-induced G-protein-independent receptor down-regulation (By similarity).</text>
</comment>
<comment type="PTM">
    <text evidence="2">Phosphorylated. Differentially phosphorylated in basal and agonist-induced conditions. Agonist-mediated phosphorylation modulates receptor internalization. Phosphorylated by GRK2 in a agonist-dependent manner. Phosphorylated on tyrosine residues; the phosphorylation is involved in agonist-induced G-protein-independent receptor down-regulation.</text>
</comment>
<comment type="PTM">
    <text evidence="4">Ubiquitinated. A basal ubiquitination seems not to be related to degradation. Ubiquitination is increased upon formation of OPRM1:OPRD1 oligomers leading to proteasomal degradation; the ubiquitination is diminished by RTP4.</text>
</comment>
<comment type="similarity">
    <text evidence="5">Belongs to the G-protein coupled receptor 1 family.</text>
</comment>
<protein>
    <recommendedName>
        <fullName>Mu-type opioid receptor</fullName>
        <shortName>M-OR-1</shortName>
        <shortName>MOR-1</shortName>
    </recommendedName>
</protein>
<evidence type="ECO:0000250" key="1"/>
<evidence type="ECO:0000250" key="2">
    <source>
        <dbReference type="UniProtKB" id="P33535"/>
    </source>
</evidence>
<evidence type="ECO:0000250" key="3">
    <source>
        <dbReference type="UniProtKB" id="P35372"/>
    </source>
</evidence>
<evidence type="ECO:0000250" key="4">
    <source>
        <dbReference type="UniProtKB" id="P42866"/>
    </source>
</evidence>
<evidence type="ECO:0000255" key="5">
    <source>
        <dbReference type="PROSITE-ProRule" id="PRU00521"/>
    </source>
</evidence>
<evidence type="ECO:0000269" key="6">
    <source>
    </source>
</evidence>
<reference key="1">
    <citation type="submission" date="1997-01" db="EMBL/GenBank/DDBJ databases">
        <authorList>
            <person name="Ronnekleiv O.K."/>
            <person name="Bosch M.A."/>
            <person name="Cunningham M.J."/>
            <person name="Wagner E.J."/>
            <person name="Grandy D.K."/>
            <person name="Kelly M.J."/>
        </authorList>
    </citation>
    <scope>NUCLEOTIDE SEQUENCE [GENOMIC DNA]</scope>
</reference>
<reference key="2">
    <citation type="journal article" date="1996" name="Proc. Natl. Acad. Sci. U.S.A.">
        <title>Agonist-selective endocytosis of mu opioid receptor by neurons in vivo.</title>
        <authorList>
            <person name="Sternini C."/>
            <person name="Spann M."/>
            <person name="Anton B."/>
            <person name="Keith D.E. Jr."/>
            <person name="Bunnett N.W."/>
            <person name="von Zastrow M."/>
            <person name="Evans C."/>
            <person name="Brecha N.C."/>
        </authorList>
    </citation>
    <scope>SUBCELLULAR LOCATION</scope>
    <scope>RECEPTOR INTERNALIZATION</scope>
    <scope>FUNCTION</scope>
</reference>
<sequence>YTKMKTATNIYIFNLALADALATSTLPFQSVNYLMGTWPFGTILCKIVISIDYYNMFTSIFTLCTMSVDRYIAVCHPVKALDFRTPRNAKTVNVCNWI</sequence>
<feature type="chain" id="PRO_0000069971" description="Mu-type opioid receptor">
    <location>
        <begin position="1" status="less than"/>
        <end position="98" status="greater than"/>
    </location>
</feature>
<feature type="topological domain" description="Cytoplasmic" evidence="4">
    <location>
        <begin position="1" status="less than"/>
        <end position="9"/>
    </location>
</feature>
<feature type="transmembrane region" description="Helical; Name=2" evidence="4">
    <location>
        <begin position="10"/>
        <end position="34"/>
    </location>
</feature>
<feature type="topological domain" description="Extracellular" evidence="4">
    <location>
        <begin position="35"/>
        <end position="45"/>
    </location>
</feature>
<feature type="transmembrane region" description="Helical; Name=3" evidence="4">
    <location>
        <begin position="46"/>
        <end position="68"/>
    </location>
</feature>
<feature type="topological domain" description="Cytoplasmic" evidence="4">
    <location>
        <begin position="69"/>
        <end position="88"/>
    </location>
</feature>
<feature type="transmembrane region" description="Helical; Name=4" evidence="4">
    <location>
        <begin position="89"/>
        <end position="98" status="greater than"/>
    </location>
</feature>
<feature type="modified residue" description="Phosphotyrosine" evidence="2">
    <location>
        <position position="71"/>
    </location>
</feature>
<feature type="non-terminal residue">
    <location>
        <position position="1"/>
    </location>
</feature>
<feature type="non-terminal residue">
    <location>
        <position position="98"/>
    </location>
</feature>
<dbReference type="EMBL" id="U67928">
    <property type="protein sequence ID" value="AAB39617.1"/>
    <property type="molecule type" value="Genomic_DNA"/>
</dbReference>
<dbReference type="SMR" id="P97266"/>
<dbReference type="STRING" id="10141.ENSCPOP00000015591"/>
<dbReference type="BindingDB" id="P97266"/>
<dbReference type="ChEMBL" id="CHEMBL4354"/>
<dbReference type="DrugCentral" id="P97266"/>
<dbReference type="eggNOG" id="KOG3656">
    <property type="taxonomic scope" value="Eukaryota"/>
</dbReference>
<dbReference type="InParanoid" id="P97266"/>
<dbReference type="Proteomes" id="UP000005447">
    <property type="component" value="Unassembled WGS sequence"/>
</dbReference>
<dbReference type="GO" id="GO:0030424">
    <property type="term" value="C:axon"/>
    <property type="evidence" value="ECO:0000314"/>
    <property type="project" value="UniProtKB"/>
</dbReference>
<dbReference type="GO" id="GO:0030425">
    <property type="term" value="C:dendrite"/>
    <property type="evidence" value="ECO:0000314"/>
    <property type="project" value="UniProtKB"/>
</dbReference>
<dbReference type="GO" id="GO:0005768">
    <property type="term" value="C:endosome"/>
    <property type="evidence" value="ECO:0000314"/>
    <property type="project" value="UniProtKB"/>
</dbReference>
<dbReference type="GO" id="GO:0043204">
    <property type="term" value="C:perikaryon"/>
    <property type="evidence" value="ECO:0007669"/>
    <property type="project" value="UniProtKB-SubCell"/>
</dbReference>
<dbReference type="GO" id="GO:0005886">
    <property type="term" value="C:plasma membrane"/>
    <property type="evidence" value="ECO:0000314"/>
    <property type="project" value="UniProtKB"/>
</dbReference>
<dbReference type="GO" id="GO:0045202">
    <property type="term" value="C:synapse"/>
    <property type="evidence" value="ECO:0007669"/>
    <property type="project" value="GOC"/>
</dbReference>
<dbReference type="GO" id="GO:0004979">
    <property type="term" value="F:beta-endorphin receptor activity"/>
    <property type="evidence" value="ECO:0007669"/>
    <property type="project" value="TreeGrafter"/>
</dbReference>
<dbReference type="GO" id="GO:0004930">
    <property type="term" value="F:G protein-coupled receptor activity"/>
    <property type="evidence" value="ECO:0000250"/>
    <property type="project" value="UniProtKB"/>
</dbReference>
<dbReference type="GO" id="GO:0001965">
    <property type="term" value="F:G-protein alpha-subunit binding"/>
    <property type="evidence" value="ECO:0000250"/>
    <property type="project" value="UniProtKB"/>
</dbReference>
<dbReference type="GO" id="GO:0031681">
    <property type="term" value="F:G-protein beta-subunit binding"/>
    <property type="evidence" value="ECO:0007669"/>
    <property type="project" value="TreeGrafter"/>
</dbReference>
<dbReference type="GO" id="GO:0038047">
    <property type="term" value="F:morphine receptor activity"/>
    <property type="evidence" value="ECO:0000250"/>
    <property type="project" value="UniProtKB"/>
</dbReference>
<dbReference type="GO" id="GO:0042923">
    <property type="term" value="F:neuropeptide binding"/>
    <property type="evidence" value="ECO:0007669"/>
    <property type="project" value="TreeGrafter"/>
</dbReference>
<dbReference type="GO" id="GO:0005245">
    <property type="term" value="F:voltage-gated calcium channel activity"/>
    <property type="evidence" value="ECO:0000250"/>
    <property type="project" value="UniProtKB"/>
</dbReference>
<dbReference type="GO" id="GO:0007197">
    <property type="term" value="P:adenylate cyclase-inhibiting G protein-coupled acetylcholine receptor signaling pathway"/>
    <property type="evidence" value="ECO:0000250"/>
    <property type="project" value="UniProtKB"/>
</dbReference>
<dbReference type="GO" id="GO:0007193">
    <property type="term" value="P:adenylate cyclase-inhibiting G protein-coupled receptor signaling pathway"/>
    <property type="evidence" value="ECO:0000250"/>
    <property type="project" value="UniProtKB"/>
</dbReference>
<dbReference type="GO" id="GO:0038003">
    <property type="term" value="P:G protein-coupled opioid receptor signaling pathway"/>
    <property type="evidence" value="ECO:0000314"/>
    <property type="project" value="UniProtKB"/>
</dbReference>
<dbReference type="GO" id="GO:0051481">
    <property type="term" value="P:negative regulation of cytosolic calcium ion concentration"/>
    <property type="evidence" value="ECO:0000250"/>
    <property type="project" value="UniProtKB"/>
</dbReference>
<dbReference type="GO" id="GO:0045019">
    <property type="term" value="P:negative regulation of nitric oxide biosynthetic process"/>
    <property type="evidence" value="ECO:0000250"/>
    <property type="project" value="UniProtKB"/>
</dbReference>
<dbReference type="GO" id="GO:0061358">
    <property type="term" value="P:negative regulation of Wnt protein secretion"/>
    <property type="evidence" value="ECO:0000250"/>
    <property type="project" value="UniProtKB"/>
</dbReference>
<dbReference type="GO" id="GO:0007200">
    <property type="term" value="P:phospholipase C-activating G protein-coupled receptor signaling pathway"/>
    <property type="evidence" value="ECO:0000250"/>
    <property type="project" value="UniProtKB"/>
</dbReference>
<dbReference type="GO" id="GO:0070374">
    <property type="term" value="P:positive regulation of ERK1 and ERK2 cascade"/>
    <property type="evidence" value="ECO:0000250"/>
    <property type="project" value="UniProtKB"/>
</dbReference>
<dbReference type="GO" id="GO:0050769">
    <property type="term" value="P:positive regulation of neurogenesis"/>
    <property type="evidence" value="ECO:0000250"/>
    <property type="project" value="UniProtKB"/>
</dbReference>
<dbReference type="GO" id="GO:2000310">
    <property type="term" value="P:regulation of NMDA receptor activity"/>
    <property type="evidence" value="ECO:0000250"/>
    <property type="project" value="UniProtKB"/>
</dbReference>
<dbReference type="GO" id="GO:0019233">
    <property type="term" value="P:sensory perception of pain"/>
    <property type="evidence" value="ECO:0000250"/>
    <property type="project" value="UniProtKB"/>
</dbReference>
<dbReference type="FunFam" id="1.20.1070.10:FF:001725">
    <property type="entry name" value="Mu-type opioid receptor"/>
    <property type="match status" value="1"/>
</dbReference>
<dbReference type="Gene3D" id="1.20.1070.10">
    <property type="entry name" value="Rhodopsin 7-helix transmembrane proteins"/>
    <property type="match status" value="1"/>
</dbReference>
<dbReference type="InterPro" id="IPR000276">
    <property type="entry name" value="GPCR_Rhodpsn"/>
</dbReference>
<dbReference type="InterPro" id="IPR017452">
    <property type="entry name" value="GPCR_Rhodpsn_7TM"/>
</dbReference>
<dbReference type="InterPro" id="IPR001418">
    <property type="entry name" value="Opioid_rcpt"/>
</dbReference>
<dbReference type="PANTHER" id="PTHR24229:SF7">
    <property type="entry name" value="MU-TYPE OPIOID RECEPTOR"/>
    <property type="match status" value="1"/>
</dbReference>
<dbReference type="PANTHER" id="PTHR24229">
    <property type="entry name" value="NEUROPEPTIDES RECEPTOR"/>
    <property type="match status" value="1"/>
</dbReference>
<dbReference type="Pfam" id="PF00001">
    <property type="entry name" value="7tm_1"/>
    <property type="match status" value="1"/>
</dbReference>
<dbReference type="PRINTS" id="PR00237">
    <property type="entry name" value="GPCRRHODOPSN"/>
</dbReference>
<dbReference type="PRINTS" id="PR00384">
    <property type="entry name" value="OPIOIDR"/>
</dbReference>
<dbReference type="SUPFAM" id="SSF81321">
    <property type="entry name" value="Family A G protein-coupled receptor-like"/>
    <property type="match status" value="1"/>
</dbReference>
<dbReference type="PROSITE" id="PS00237">
    <property type="entry name" value="G_PROTEIN_RECEP_F1_1"/>
    <property type="match status" value="1"/>
</dbReference>
<dbReference type="PROSITE" id="PS50262">
    <property type="entry name" value="G_PROTEIN_RECEP_F1_2"/>
    <property type="match status" value="1"/>
</dbReference>
<keyword id="KW-1003">Cell membrane</keyword>
<keyword id="KW-0966">Cell projection</keyword>
<keyword id="KW-0967">Endosome</keyword>
<keyword id="KW-0297">G-protein coupled receptor</keyword>
<keyword id="KW-0449">Lipoprotein</keyword>
<keyword id="KW-0472">Membrane</keyword>
<keyword id="KW-0564">Palmitate</keyword>
<keyword id="KW-0597">Phosphoprotein</keyword>
<keyword id="KW-0675">Receptor</keyword>
<keyword id="KW-1185">Reference proteome</keyword>
<keyword id="KW-0807">Transducer</keyword>
<keyword id="KW-0812">Transmembrane</keyword>
<keyword id="KW-1133">Transmembrane helix</keyword>
<keyword id="KW-0832">Ubl conjugation</keyword>
<accession>P97266</accession>
<name>OPRM_CAVPO</name>
<gene>
    <name type="primary">OPRM1</name>
</gene>